<proteinExistence type="inferred from homology"/>
<sequence>MLERMLPFLGRKRDKAAADLPVRVGHSAPRNSRMLEYDQNLVWVTLLLLAYGLVMVYSATISFHDSPRYAQWSPYHYFIRDLFSIAAALLASWIVVQIPMAELQKWSMRFFFLSLIGLVLVLLPHIGKDVNGSKRWVVFPGGLNFQPSELVKLTALIYAADFMVRKQEVKQSLLKTFLPMMAVMMIVGVLLLAEPDMGAFLVIASITLAILFLGGANGKLFSVFSVAVIGAFVLMIVLSPWRRDRIFAYLNPWSESNALGSAYQLSHALIAMGRGEWFGVGLGGSIEKLHYLPEAHTDFLLAIIGEELGLVGVGVVIFAFYWIVRRAFDIGRQALVLDRMYSALVAQGIGVWIGGQAFINIGVNLGLLPTKGLTLPLMSYGGSALLLNCMAIAVLLRVDFENRILMRGGHV</sequence>
<protein>
    <recommendedName>
        <fullName evidence="2">Probable peptidoglycan glycosyltransferase FtsW</fullName>
        <shortName evidence="2">PGT</shortName>
        <ecNumber evidence="2">2.4.99.28</ecNumber>
    </recommendedName>
    <alternativeName>
        <fullName evidence="2">Cell division protein FtsW</fullName>
    </alternativeName>
    <alternativeName>
        <fullName evidence="2">Cell wall polymerase</fullName>
    </alternativeName>
    <alternativeName>
        <fullName evidence="2">Peptidoglycan polymerase</fullName>
        <shortName evidence="2">PG polymerase</shortName>
    </alternativeName>
</protein>
<evidence type="ECO:0000255" key="1"/>
<evidence type="ECO:0000255" key="2">
    <source>
        <dbReference type="HAMAP-Rule" id="MF_00913"/>
    </source>
</evidence>
<dbReference type="EC" id="2.4.99.28" evidence="2"/>
<dbReference type="EMBL" id="CP002021">
    <property type="protein sequence ID" value="ADG29775.1"/>
    <property type="molecule type" value="Genomic_DNA"/>
</dbReference>
<dbReference type="SMR" id="D5X4H4"/>
<dbReference type="STRING" id="75379.Tint_0364"/>
<dbReference type="KEGG" id="tin:Tint_0364"/>
<dbReference type="eggNOG" id="COG0772">
    <property type="taxonomic scope" value="Bacteria"/>
</dbReference>
<dbReference type="HOGENOM" id="CLU_029243_1_1_4"/>
<dbReference type="BioCyc" id="TINT75379:TINT_RS01850-MONOMER"/>
<dbReference type="UniPathway" id="UPA00219"/>
<dbReference type="GO" id="GO:0032153">
    <property type="term" value="C:cell division site"/>
    <property type="evidence" value="ECO:0007669"/>
    <property type="project" value="UniProtKB-UniRule"/>
</dbReference>
<dbReference type="GO" id="GO:0005886">
    <property type="term" value="C:plasma membrane"/>
    <property type="evidence" value="ECO:0007669"/>
    <property type="project" value="UniProtKB-SubCell"/>
</dbReference>
<dbReference type="GO" id="GO:0015648">
    <property type="term" value="F:lipid-linked peptidoglycan transporter activity"/>
    <property type="evidence" value="ECO:0007669"/>
    <property type="project" value="TreeGrafter"/>
</dbReference>
<dbReference type="GO" id="GO:0008955">
    <property type="term" value="F:peptidoglycan glycosyltransferase activity"/>
    <property type="evidence" value="ECO:0007669"/>
    <property type="project" value="UniProtKB-UniRule"/>
</dbReference>
<dbReference type="GO" id="GO:0071555">
    <property type="term" value="P:cell wall organization"/>
    <property type="evidence" value="ECO:0007669"/>
    <property type="project" value="UniProtKB-KW"/>
</dbReference>
<dbReference type="GO" id="GO:0043093">
    <property type="term" value="P:FtsZ-dependent cytokinesis"/>
    <property type="evidence" value="ECO:0007669"/>
    <property type="project" value="UniProtKB-UniRule"/>
</dbReference>
<dbReference type="GO" id="GO:0009252">
    <property type="term" value="P:peptidoglycan biosynthetic process"/>
    <property type="evidence" value="ECO:0007669"/>
    <property type="project" value="UniProtKB-UniRule"/>
</dbReference>
<dbReference type="GO" id="GO:0008360">
    <property type="term" value="P:regulation of cell shape"/>
    <property type="evidence" value="ECO:0007669"/>
    <property type="project" value="UniProtKB-KW"/>
</dbReference>
<dbReference type="HAMAP" id="MF_00913">
    <property type="entry name" value="PGT_FtsW_proteobact"/>
    <property type="match status" value="1"/>
</dbReference>
<dbReference type="InterPro" id="IPR018365">
    <property type="entry name" value="Cell_cycle_FtsW-rel_CS"/>
</dbReference>
<dbReference type="InterPro" id="IPR013437">
    <property type="entry name" value="FtsW"/>
</dbReference>
<dbReference type="InterPro" id="IPR001182">
    <property type="entry name" value="FtsW/RodA"/>
</dbReference>
<dbReference type="NCBIfam" id="TIGR02614">
    <property type="entry name" value="ftsW"/>
    <property type="match status" value="1"/>
</dbReference>
<dbReference type="PANTHER" id="PTHR30474">
    <property type="entry name" value="CELL CYCLE PROTEIN"/>
    <property type="match status" value="1"/>
</dbReference>
<dbReference type="PANTHER" id="PTHR30474:SF2">
    <property type="entry name" value="PEPTIDOGLYCAN GLYCOSYLTRANSFERASE FTSW-RELATED"/>
    <property type="match status" value="1"/>
</dbReference>
<dbReference type="Pfam" id="PF01098">
    <property type="entry name" value="FTSW_RODA_SPOVE"/>
    <property type="match status" value="1"/>
</dbReference>
<dbReference type="PROSITE" id="PS00428">
    <property type="entry name" value="FTSW_RODA_SPOVE"/>
    <property type="match status" value="1"/>
</dbReference>
<comment type="function">
    <text evidence="2">Peptidoglycan polymerase that is essential for cell division.</text>
</comment>
<comment type="catalytic activity">
    <reaction evidence="2">
        <text>[GlcNAc-(1-&gt;4)-Mur2Ac(oyl-L-Ala-gamma-D-Glu-L-Lys-D-Ala-D-Ala)](n)-di-trans,octa-cis-undecaprenyl diphosphate + beta-D-GlcNAc-(1-&gt;4)-Mur2Ac(oyl-L-Ala-gamma-D-Glu-L-Lys-D-Ala-D-Ala)-di-trans,octa-cis-undecaprenyl diphosphate = [GlcNAc-(1-&gt;4)-Mur2Ac(oyl-L-Ala-gamma-D-Glu-L-Lys-D-Ala-D-Ala)](n+1)-di-trans,octa-cis-undecaprenyl diphosphate + di-trans,octa-cis-undecaprenyl diphosphate + H(+)</text>
        <dbReference type="Rhea" id="RHEA:23708"/>
        <dbReference type="Rhea" id="RHEA-COMP:9602"/>
        <dbReference type="Rhea" id="RHEA-COMP:9603"/>
        <dbReference type="ChEBI" id="CHEBI:15378"/>
        <dbReference type="ChEBI" id="CHEBI:58405"/>
        <dbReference type="ChEBI" id="CHEBI:60033"/>
        <dbReference type="ChEBI" id="CHEBI:78435"/>
        <dbReference type="EC" id="2.4.99.28"/>
    </reaction>
</comment>
<comment type="pathway">
    <text evidence="2">Cell wall biogenesis; peptidoglycan biosynthesis.</text>
</comment>
<comment type="subcellular location">
    <subcellularLocation>
        <location evidence="2">Cell inner membrane</location>
        <topology evidence="2">Multi-pass membrane protein</topology>
    </subcellularLocation>
    <text evidence="2">Localizes to the division septum.</text>
</comment>
<comment type="similarity">
    <text evidence="2">Belongs to the SEDS family. FtsW subfamily.</text>
</comment>
<reference key="1">
    <citation type="submission" date="2010-04" db="EMBL/GenBank/DDBJ databases">
        <title>Complete sequence of Thiomonas intermedia K12.</title>
        <authorList>
            <consortium name="US DOE Joint Genome Institute"/>
            <person name="Lucas S."/>
            <person name="Copeland A."/>
            <person name="Lapidus A."/>
            <person name="Cheng J.-F."/>
            <person name="Bruce D."/>
            <person name="Goodwin L."/>
            <person name="Pitluck S."/>
            <person name="Davenport K."/>
            <person name="Detter J.C."/>
            <person name="Han C."/>
            <person name="Tapia R."/>
            <person name="Land M."/>
            <person name="Hauser L."/>
            <person name="Kyrpides N."/>
            <person name="Ovchinnikova G."/>
            <person name="Kerfeld C.A."/>
            <person name="Cannon G.C."/>
            <person name="Heinhorst S."/>
            <person name="Woyke T."/>
        </authorList>
    </citation>
    <scope>NUCLEOTIDE SEQUENCE [LARGE SCALE GENOMIC DNA]</scope>
    <source>
        <strain>K12</strain>
    </source>
</reference>
<accession>D5X4H4</accession>
<organism>
    <name type="scientific">Thiomonas intermedia (strain K12)</name>
    <name type="common">Thiobacillus intermedius</name>
    <dbReference type="NCBI Taxonomy" id="75379"/>
    <lineage>
        <taxon>Bacteria</taxon>
        <taxon>Pseudomonadati</taxon>
        <taxon>Pseudomonadota</taxon>
        <taxon>Betaproteobacteria</taxon>
        <taxon>Burkholderiales</taxon>
        <taxon>Thiomonas</taxon>
    </lineage>
</organism>
<keyword id="KW-0131">Cell cycle</keyword>
<keyword id="KW-0132">Cell division</keyword>
<keyword id="KW-0997">Cell inner membrane</keyword>
<keyword id="KW-1003">Cell membrane</keyword>
<keyword id="KW-0133">Cell shape</keyword>
<keyword id="KW-0961">Cell wall biogenesis/degradation</keyword>
<keyword id="KW-0328">Glycosyltransferase</keyword>
<keyword id="KW-0472">Membrane</keyword>
<keyword id="KW-0573">Peptidoglycan synthesis</keyword>
<keyword id="KW-0808">Transferase</keyword>
<keyword id="KW-0812">Transmembrane</keyword>
<keyword id="KW-1133">Transmembrane helix</keyword>
<feature type="chain" id="PRO_0000415218" description="Probable peptidoglycan glycosyltransferase FtsW">
    <location>
        <begin position="1"/>
        <end position="411"/>
    </location>
</feature>
<feature type="topological domain" description="Cytoplasmic" evidence="1">
    <location>
        <begin position="1"/>
        <end position="40"/>
    </location>
</feature>
<feature type="transmembrane region" description="Helical" evidence="2">
    <location>
        <begin position="41"/>
        <end position="61"/>
    </location>
</feature>
<feature type="topological domain" description="Periplasmic" evidence="1">
    <location>
        <begin position="62"/>
        <end position="81"/>
    </location>
</feature>
<feature type="transmembrane region" description="Helical" evidence="2">
    <location>
        <begin position="82"/>
        <end position="102"/>
    </location>
</feature>
<feature type="topological domain" description="Cytoplasmic" evidence="1">
    <location>
        <begin position="103"/>
        <end position="109"/>
    </location>
</feature>
<feature type="transmembrane region" description="Helical" evidence="2">
    <location>
        <begin position="110"/>
        <end position="130"/>
    </location>
</feature>
<feature type="topological domain" description="Periplasmic" evidence="1">
    <location>
        <begin position="131"/>
        <end position="136"/>
    </location>
</feature>
<feature type="transmembrane region" description="Helical" evidence="2">
    <location>
        <begin position="137"/>
        <end position="157"/>
    </location>
</feature>
<feature type="topological domain" description="Cytoplasmic" evidence="1">
    <location>
        <begin position="158"/>
        <end position="172"/>
    </location>
</feature>
<feature type="transmembrane region" description="Helical" evidence="2">
    <location>
        <begin position="173"/>
        <end position="193"/>
    </location>
</feature>
<feature type="topological domain" description="Periplasmic" evidence="1">
    <location>
        <begin position="194"/>
        <end position="196"/>
    </location>
</feature>
<feature type="transmembrane region" description="Helical" evidence="2">
    <location>
        <begin position="197"/>
        <end position="217"/>
    </location>
</feature>
<feature type="topological domain" description="Cytoplasmic" evidence="1">
    <location>
        <begin position="218"/>
        <end position="219"/>
    </location>
</feature>
<feature type="transmembrane region" description="Helical" evidence="2">
    <location>
        <begin position="220"/>
        <end position="240"/>
    </location>
</feature>
<feature type="topological domain" description="Periplasmic" evidence="1">
    <location>
        <begin position="241"/>
        <end position="298"/>
    </location>
</feature>
<feature type="transmembrane region" description="Helical" evidence="2">
    <location>
        <begin position="299"/>
        <end position="319"/>
    </location>
</feature>
<feature type="topological domain" description="Cytoplasmic" evidence="1">
    <location>
        <begin position="320"/>
        <end position="347"/>
    </location>
</feature>
<feature type="transmembrane region" description="Helical" evidence="2">
    <location>
        <begin position="348"/>
        <end position="368"/>
    </location>
</feature>
<feature type="topological domain" description="Periplasmic" evidence="1">
    <location>
        <begin position="369"/>
        <end position="374"/>
    </location>
</feature>
<feature type="transmembrane region" description="Helical" evidence="2">
    <location>
        <begin position="375"/>
        <end position="395"/>
    </location>
</feature>
<feature type="topological domain" description="Cytoplasmic" evidence="1">
    <location>
        <begin position="396"/>
        <end position="411"/>
    </location>
</feature>
<name>FTSW_THIK1</name>
<gene>
    <name evidence="2" type="primary">ftsW</name>
    <name type="ordered locus">Tint_0364</name>
</gene>